<gene>
    <name evidence="1" type="primary">gcvH</name>
    <name type="ordered locus">ECS88_3183</name>
</gene>
<accession>B7MM90</accession>
<feature type="chain" id="PRO_1000119298" description="Glycine cleavage system H protein">
    <location>
        <begin position="1"/>
        <end position="129"/>
    </location>
</feature>
<feature type="domain" description="Lipoyl-binding" evidence="2">
    <location>
        <begin position="24"/>
        <end position="106"/>
    </location>
</feature>
<feature type="modified residue" description="N6-lipoyllysine" evidence="1">
    <location>
        <position position="65"/>
    </location>
</feature>
<dbReference type="EMBL" id="CU928161">
    <property type="protein sequence ID" value="CAR04419.1"/>
    <property type="molecule type" value="Genomic_DNA"/>
</dbReference>
<dbReference type="RefSeq" id="WP_001305302.1">
    <property type="nucleotide sequence ID" value="NC_011742.1"/>
</dbReference>
<dbReference type="SMR" id="B7MM90"/>
<dbReference type="KEGG" id="ecz:ECS88_3183"/>
<dbReference type="HOGENOM" id="CLU_097408_2_1_6"/>
<dbReference type="Proteomes" id="UP000000747">
    <property type="component" value="Chromosome"/>
</dbReference>
<dbReference type="GO" id="GO:0005829">
    <property type="term" value="C:cytosol"/>
    <property type="evidence" value="ECO:0007669"/>
    <property type="project" value="TreeGrafter"/>
</dbReference>
<dbReference type="GO" id="GO:0005960">
    <property type="term" value="C:glycine cleavage complex"/>
    <property type="evidence" value="ECO:0007669"/>
    <property type="project" value="InterPro"/>
</dbReference>
<dbReference type="GO" id="GO:0019464">
    <property type="term" value="P:glycine decarboxylation via glycine cleavage system"/>
    <property type="evidence" value="ECO:0007669"/>
    <property type="project" value="UniProtKB-UniRule"/>
</dbReference>
<dbReference type="CDD" id="cd06848">
    <property type="entry name" value="GCS_H"/>
    <property type="match status" value="1"/>
</dbReference>
<dbReference type="FunFam" id="2.40.50.100:FF:000011">
    <property type="entry name" value="Glycine cleavage system H protein"/>
    <property type="match status" value="1"/>
</dbReference>
<dbReference type="Gene3D" id="2.40.50.100">
    <property type="match status" value="1"/>
</dbReference>
<dbReference type="HAMAP" id="MF_00272">
    <property type="entry name" value="GcvH"/>
    <property type="match status" value="1"/>
</dbReference>
<dbReference type="InterPro" id="IPR003016">
    <property type="entry name" value="2-oxoA_DH_lipoyl-BS"/>
</dbReference>
<dbReference type="InterPro" id="IPR000089">
    <property type="entry name" value="Biotin_lipoyl"/>
</dbReference>
<dbReference type="InterPro" id="IPR002930">
    <property type="entry name" value="GCV_H"/>
</dbReference>
<dbReference type="InterPro" id="IPR033753">
    <property type="entry name" value="GCV_H/Fam206"/>
</dbReference>
<dbReference type="InterPro" id="IPR017453">
    <property type="entry name" value="GCV_H_sub"/>
</dbReference>
<dbReference type="InterPro" id="IPR011053">
    <property type="entry name" value="Single_hybrid_motif"/>
</dbReference>
<dbReference type="NCBIfam" id="TIGR00527">
    <property type="entry name" value="gcvH"/>
    <property type="match status" value="1"/>
</dbReference>
<dbReference type="NCBIfam" id="NF002270">
    <property type="entry name" value="PRK01202.1"/>
    <property type="match status" value="1"/>
</dbReference>
<dbReference type="PANTHER" id="PTHR11715">
    <property type="entry name" value="GLYCINE CLEAVAGE SYSTEM H PROTEIN"/>
    <property type="match status" value="1"/>
</dbReference>
<dbReference type="PANTHER" id="PTHR11715:SF3">
    <property type="entry name" value="GLYCINE CLEAVAGE SYSTEM H PROTEIN-RELATED"/>
    <property type="match status" value="1"/>
</dbReference>
<dbReference type="Pfam" id="PF01597">
    <property type="entry name" value="GCV_H"/>
    <property type="match status" value="1"/>
</dbReference>
<dbReference type="SUPFAM" id="SSF51230">
    <property type="entry name" value="Single hybrid motif"/>
    <property type="match status" value="1"/>
</dbReference>
<dbReference type="PROSITE" id="PS50968">
    <property type="entry name" value="BIOTINYL_LIPOYL"/>
    <property type="match status" value="1"/>
</dbReference>
<dbReference type="PROSITE" id="PS00189">
    <property type="entry name" value="LIPOYL"/>
    <property type="match status" value="1"/>
</dbReference>
<comment type="function">
    <text evidence="1">The glycine cleavage system catalyzes the degradation of glycine. The H protein shuttles the methylamine group of glycine from the P protein to the T protein.</text>
</comment>
<comment type="cofactor">
    <cofactor evidence="1">
        <name>(R)-lipoate</name>
        <dbReference type="ChEBI" id="CHEBI:83088"/>
    </cofactor>
    <text evidence="1">Binds 1 lipoyl cofactor covalently.</text>
</comment>
<comment type="subunit">
    <text evidence="1">The glycine cleavage system is composed of four proteins: P, T, L and H.</text>
</comment>
<comment type="similarity">
    <text evidence="1">Belongs to the GcvH family.</text>
</comment>
<proteinExistence type="inferred from homology"/>
<keyword id="KW-0450">Lipoyl</keyword>
<keyword id="KW-1185">Reference proteome</keyword>
<organism>
    <name type="scientific">Escherichia coli O45:K1 (strain S88 / ExPEC)</name>
    <dbReference type="NCBI Taxonomy" id="585035"/>
    <lineage>
        <taxon>Bacteria</taxon>
        <taxon>Pseudomonadati</taxon>
        <taxon>Pseudomonadota</taxon>
        <taxon>Gammaproteobacteria</taxon>
        <taxon>Enterobacterales</taxon>
        <taxon>Enterobacteriaceae</taxon>
        <taxon>Escherichia</taxon>
    </lineage>
</organism>
<sequence length="129" mass="13825">MSNIPAELKYSKEHEWLRKEADGTYTVGITEHAQELLGDMVFVDLPEVGATVSAGDDCAVAESVKAASDIYAPVSGEIVAVNDALSDSPELVNSEPYAGGWIFKIKASDESELESLLDATAYEALLEDE</sequence>
<evidence type="ECO:0000255" key="1">
    <source>
        <dbReference type="HAMAP-Rule" id="MF_00272"/>
    </source>
</evidence>
<evidence type="ECO:0000255" key="2">
    <source>
        <dbReference type="PROSITE-ProRule" id="PRU01066"/>
    </source>
</evidence>
<reference key="1">
    <citation type="journal article" date="2009" name="PLoS Genet.">
        <title>Organised genome dynamics in the Escherichia coli species results in highly diverse adaptive paths.</title>
        <authorList>
            <person name="Touchon M."/>
            <person name="Hoede C."/>
            <person name="Tenaillon O."/>
            <person name="Barbe V."/>
            <person name="Baeriswyl S."/>
            <person name="Bidet P."/>
            <person name="Bingen E."/>
            <person name="Bonacorsi S."/>
            <person name="Bouchier C."/>
            <person name="Bouvet O."/>
            <person name="Calteau A."/>
            <person name="Chiapello H."/>
            <person name="Clermont O."/>
            <person name="Cruveiller S."/>
            <person name="Danchin A."/>
            <person name="Diard M."/>
            <person name="Dossat C."/>
            <person name="Karoui M.E."/>
            <person name="Frapy E."/>
            <person name="Garry L."/>
            <person name="Ghigo J.M."/>
            <person name="Gilles A.M."/>
            <person name="Johnson J."/>
            <person name="Le Bouguenec C."/>
            <person name="Lescat M."/>
            <person name="Mangenot S."/>
            <person name="Martinez-Jehanne V."/>
            <person name="Matic I."/>
            <person name="Nassif X."/>
            <person name="Oztas S."/>
            <person name="Petit M.A."/>
            <person name="Pichon C."/>
            <person name="Rouy Z."/>
            <person name="Ruf C.S."/>
            <person name="Schneider D."/>
            <person name="Tourret J."/>
            <person name="Vacherie B."/>
            <person name="Vallenet D."/>
            <person name="Medigue C."/>
            <person name="Rocha E.P.C."/>
            <person name="Denamur E."/>
        </authorList>
    </citation>
    <scope>NUCLEOTIDE SEQUENCE [LARGE SCALE GENOMIC DNA]</scope>
    <source>
        <strain>S88 / ExPEC</strain>
    </source>
</reference>
<name>GCSH_ECO45</name>
<protein>
    <recommendedName>
        <fullName evidence="1">Glycine cleavage system H protein</fullName>
    </recommendedName>
</protein>